<comment type="subunit">
    <text>Can form homopolymers.</text>
</comment>
<comment type="subcellular location">
    <subcellularLocation>
        <location>Cytoplasm</location>
    </subcellularLocation>
</comment>
<comment type="similarity">
    <text evidence="1">Belongs to the intermediate filament family.</text>
</comment>
<feature type="chain" id="PRO_0000063862" description="Non-neuronal cytoplasmic intermediate filament protein">
    <location>
        <begin position="1"/>
        <end position="464"/>
    </location>
</feature>
<feature type="domain" description="IF rod" evidence="1">
    <location>
        <begin position="98"/>
        <end position="413"/>
    </location>
</feature>
<feature type="region of interest" description="Head">
    <location>
        <begin position="1"/>
        <end position="101"/>
    </location>
</feature>
<feature type="region of interest" description="Disordered" evidence="2">
    <location>
        <begin position="1"/>
        <end position="59"/>
    </location>
</feature>
<feature type="region of interest" description="Coil 1A">
    <location>
        <begin position="102"/>
        <end position="133"/>
    </location>
</feature>
<feature type="region of interest" description="Linker 1">
    <location>
        <begin position="134"/>
        <end position="144"/>
    </location>
</feature>
<feature type="region of interest" description="Coil 1B">
    <location>
        <begin position="145"/>
        <end position="237"/>
    </location>
</feature>
<feature type="region of interest" description="Linker 2">
    <location>
        <begin position="238"/>
        <end position="264"/>
    </location>
</feature>
<feature type="region of interest" description="Coil 2">
    <location>
        <begin position="265"/>
        <end position="413"/>
    </location>
</feature>
<feature type="region of interest" description="Tail">
    <location>
        <begin position="414"/>
        <end position="464"/>
    </location>
</feature>
<feature type="region of interest" description="Disordered" evidence="2">
    <location>
        <begin position="415"/>
        <end position="464"/>
    </location>
</feature>
<feature type="compositionally biased region" description="Polar residues" evidence="2">
    <location>
        <begin position="1"/>
        <end position="14"/>
    </location>
</feature>
<feature type="compositionally biased region" description="Gly residues" evidence="2">
    <location>
        <begin position="17"/>
        <end position="27"/>
    </location>
</feature>
<feature type="compositionally biased region" description="Low complexity" evidence="2">
    <location>
        <begin position="45"/>
        <end position="59"/>
    </location>
</feature>
<feature type="compositionally biased region" description="Low complexity" evidence="2">
    <location>
        <begin position="420"/>
        <end position="438"/>
    </location>
</feature>
<feature type="compositionally biased region" description="Gly residues" evidence="2">
    <location>
        <begin position="439"/>
        <end position="448"/>
    </location>
</feature>
<feature type="compositionally biased region" description="Low complexity" evidence="2">
    <location>
        <begin position="449"/>
        <end position="464"/>
    </location>
</feature>
<reference key="1">
    <citation type="journal article" date="1992" name="Eur. J. Cell Biol.">
        <title>Analysis of the cDNA and gene encoding a cytoplasmic intermediate filament (IF) protein from the cephalochordate Branchiostoma lanceolatum; implications for the evolution of the IF protein family.</title>
        <authorList>
            <person name="Riemer D."/>
            <person name="Dodemont H."/>
            <person name="Weber K."/>
        </authorList>
    </citation>
    <scope>NUCLEOTIDE SEQUENCE [MRNA]</scope>
</reference>
<sequence>MSTQTKKVTRTIITSSSGGGGGGGGGRASYSSSGRFSGGGGRMRAGGVTSRRSVGSSYSAGGGGRVNAVMAAGVMASVGGPAGALQTLSDARMTRAHEKQELSHLNDRFASYIDKVRYLQERNSKLEAQIKIQESREAPNIKDLYEKELRDLRALVDELSNDKAQLEIERNNWQEQAEDYKMKWQDEAGLRSELEAEIERLKKELDAATMARLDLENKLSTAQEEIDFLKRVHDEEIRQLQDQLNESLTIVEVDSRAASTFAPGPDLTEALREIRTQYEELGRVNREDADVKYKQKFSELAHQRERDNEALMTARTEVTELRRNLNSLVAENEALKSKNHALEGSLAELEARMQLEIEEYQAAIRDLEQELETKTSEMAQQMQAYKMLMDTKMALDMEIAAYRKLLEGEEIRLFGESKEGVQQTSSSSSSSYQYSMKSGSGGGGGGSSSGKQQVTVSVSSGEEK</sequence>
<accession>Q04948</accession>
<organism>
    <name type="scientific">Branchiostoma lanceolatum</name>
    <name type="common">Common lancelet</name>
    <name type="synonym">Amphioxus lanceolatum</name>
    <dbReference type="NCBI Taxonomy" id="7740"/>
    <lineage>
        <taxon>Eukaryota</taxon>
        <taxon>Metazoa</taxon>
        <taxon>Chordata</taxon>
        <taxon>Cephalochordata</taxon>
        <taxon>Leptocardii</taxon>
        <taxon>Amphioxiformes</taxon>
        <taxon>Branchiostomatidae</taxon>
        <taxon>Branchiostoma</taxon>
    </lineage>
</organism>
<dbReference type="EMBL" id="X64522">
    <property type="protein sequence ID" value="CAA45827.1"/>
    <property type="molecule type" value="mRNA"/>
</dbReference>
<dbReference type="PIR" id="A56600">
    <property type="entry name" value="A56600"/>
</dbReference>
<dbReference type="SMR" id="Q04948"/>
<dbReference type="GO" id="GO:0005737">
    <property type="term" value="C:cytoplasm"/>
    <property type="evidence" value="ECO:0007669"/>
    <property type="project" value="UniProtKB-SubCell"/>
</dbReference>
<dbReference type="GO" id="GO:0005882">
    <property type="term" value="C:intermediate filament"/>
    <property type="evidence" value="ECO:0007669"/>
    <property type="project" value="UniProtKB-KW"/>
</dbReference>
<dbReference type="GO" id="GO:0005200">
    <property type="term" value="F:structural constituent of cytoskeleton"/>
    <property type="evidence" value="ECO:0007669"/>
    <property type="project" value="TreeGrafter"/>
</dbReference>
<dbReference type="GO" id="GO:0045109">
    <property type="term" value="P:intermediate filament organization"/>
    <property type="evidence" value="ECO:0007669"/>
    <property type="project" value="TreeGrafter"/>
</dbReference>
<dbReference type="FunFam" id="1.20.5.1160:FF:000001">
    <property type="entry name" value="Keratin type II"/>
    <property type="match status" value="1"/>
</dbReference>
<dbReference type="FunFam" id="1.20.5.170:FF:000002">
    <property type="entry name" value="Type I keratin KA11"/>
    <property type="match status" value="1"/>
</dbReference>
<dbReference type="Gene3D" id="1.20.5.170">
    <property type="match status" value="1"/>
</dbReference>
<dbReference type="Gene3D" id="1.20.5.500">
    <property type="entry name" value="Single helix bin"/>
    <property type="match status" value="1"/>
</dbReference>
<dbReference type="Gene3D" id="1.20.5.1160">
    <property type="entry name" value="Vasodilator-stimulated phosphoprotein"/>
    <property type="match status" value="1"/>
</dbReference>
<dbReference type="InterPro" id="IPR018039">
    <property type="entry name" value="IF_conserved"/>
</dbReference>
<dbReference type="InterPro" id="IPR039008">
    <property type="entry name" value="IF_rod_dom"/>
</dbReference>
<dbReference type="InterPro" id="IPR050405">
    <property type="entry name" value="Intermediate_filament"/>
</dbReference>
<dbReference type="InterPro" id="IPR002957">
    <property type="entry name" value="Keratin_I"/>
</dbReference>
<dbReference type="PANTHER" id="PTHR45652">
    <property type="entry name" value="GLIAL FIBRILLARY ACIDIC PROTEIN"/>
    <property type="match status" value="1"/>
</dbReference>
<dbReference type="PANTHER" id="PTHR45652:SF21">
    <property type="entry name" value="ZINC FINGER CCCH DOMAIN-CONTAINING PROTEIN 13-LIKE ISOFORM X1"/>
    <property type="match status" value="1"/>
</dbReference>
<dbReference type="Pfam" id="PF00038">
    <property type="entry name" value="Filament"/>
    <property type="match status" value="1"/>
</dbReference>
<dbReference type="PRINTS" id="PR01248">
    <property type="entry name" value="TYPE1KERATIN"/>
</dbReference>
<dbReference type="SMART" id="SM01391">
    <property type="entry name" value="Filament"/>
    <property type="match status" value="1"/>
</dbReference>
<dbReference type="SUPFAM" id="SSF64593">
    <property type="entry name" value="Intermediate filament protein, coiled coil region"/>
    <property type="match status" value="2"/>
</dbReference>
<dbReference type="SUPFAM" id="SSF90257">
    <property type="entry name" value="Myosin rod fragments"/>
    <property type="match status" value="1"/>
</dbReference>
<dbReference type="PROSITE" id="PS00226">
    <property type="entry name" value="IF_ROD_1"/>
    <property type="match status" value="1"/>
</dbReference>
<dbReference type="PROSITE" id="PS51842">
    <property type="entry name" value="IF_ROD_2"/>
    <property type="match status" value="1"/>
</dbReference>
<name>IFE_BRALA</name>
<protein>
    <recommendedName>
        <fullName>Non-neuronal cytoplasmic intermediate filament protein</fullName>
    </recommendedName>
</protein>
<evidence type="ECO:0000255" key="1">
    <source>
        <dbReference type="PROSITE-ProRule" id="PRU01188"/>
    </source>
</evidence>
<evidence type="ECO:0000256" key="2">
    <source>
        <dbReference type="SAM" id="MobiDB-lite"/>
    </source>
</evidence>
<keyword id="KW-0175">Coiled coil</keyword>
<keyword id="KW-0963">Cytoplasm</keyword>
<keyword id="KW-0403">Intermediate filament</keyword>
<proteinExistence type="evidence at transcript level"/>